<evidence type="ECO:0000250" key="1">
    <source>
        <dbReference type="UniProtKB" id="P19097"/>
    </source>
</evidence>
<evidence type="ECO:0000255" key="2">
    <source>
        <dbReference type="PIRSR" id="PIRSR000454-4"/>
    </source>
</evidence>
<evidence type="ECO:0000255" key="3">
    <source>
        <dbReference type="PROSITE-ProRule" id="PRU00258"/>
    </source>
</evidence>
<evidence type="ECO:0000255" key="4">
    <source>
        <dbReference type="PROSITE-ProRule" id="PRU01348"/>
    </source>
</evidence>
<evidence type="ECO:0000256" key="5">
    <source>
        <dbReference type="SAM" id="MobiDB-lite"/>
    </source>
</evidence>
<evidence type="ECO:0000269" key="6">
    <source>
    </source>
</evidence>
<evidence type="ECO:0000269" key="7">
    <source>
    </source>
</evidence>
<evidence type="ECO:0000269" key="8">
    <source>
    </source>
</evidence>
<evidence type="ECO:0000269" key="9">
    <source>
    </source>
</evidence>
<evidence type="ECO:0000269" key="10">
    <source>
    </source>
</evidence>
<evidence type="ECO:0000269" key="11">
    <source>
    </source>
</evidence>
<evidence type="ECO:0000269" key="12">
    <source>
    </source>
</evidence>
<evidence type="ECO:0000269" key="13">
    <source>
    </source>
</evidence>
<evidence type="ECO:0000269" key="14">
    <source>
    </source>
</evidence>
<evidence type="ECO:0000303" key="15">
    <source>
    </source>
</evidence>
<evidence type="ECO:0000305" key="16"/>
<organism>
    <name type="scientific">Monascus ruber</name>
    <name type="common">Mold</name>
    <dbReference type="NCBI Taxonomy" id="89489"/>
    <lineage>
        <taxon>Eukaryota</taxon>
        <taxon>Fungi</taxon>
        <taxon>Dikarya</taxon>
        <taxon>Ascomycota</taxon>
        <taxon>Pezizomycotina</taxon>
        <taxon>Eurotiomycetes</taxon>
        <taxon>Eurotiomycetidae</taxon>
        <taxon>Eurotiales</taxon>
        <taxon>Aspergillaceae</taxon>
        <taxon>Monascus</taxon>
    </lineage>
</organism>
<dbReference type="EC" id="2.3.1.86" evidence="1"/>
<dbReference type="EC" id="1.1.1.100" evidence="1"/>
<dbReference type="EC" id="2.3.1.41" evidence="1"/>
<dbReference type="EMBL" id="JX675042">
    <property type="protein sequence ID" value="AGL44429.1"/>
    <property type="molecule type" value="Genomic_DNA"/>
</dbReference>
<dbReference type="SMR" id="A0A1D5AG16"/>
<dbReference type="GO" id="GO:0005835">
    <property type="term" value="C:fatty acid synthase complex"/>
    <property type="evidence" value="ECO:0007669"/>
    <property type="project" value="InterPro"/>
</dbReference>
<dbReference type="GO" id="GO:0004316">
    <property type="term" value="F:3-oxoacyl-[acyl-carrier-protein] reductase (NADPH) activity"/>
    <property type="evidence" value="ECO:0007669"/>
    <property type="project" value="InterPro"/>
</dbReference>
<dbReference type="GO" id="GO:0004315">
    <property type="term" value="F:3-oxoacyl-[acyl-carrier-protein] synthase activity"/>
    <property type="evidence" value="ECO:0007669"/>
    <property type="project" value="UniProtKB-EC"/>
</dbReference>
<dbReference type="GO" id="GO:0004312">
    <property type="term" value="F:fatty acid synthase activity"/>
    <property type="evidence" value="ECO:0007669"/>
    <property type="project" value="InterPro"/>
</dbReference>
<dbReference type="GO" id="GO:0008897">
    <property type="term" value="F:holo-[acyl-carrier-protein] synthase activity"/>
    <property type="evidence" value="ECO:0007669"/>
    <property type="project" value="InterPro"/>
</dbReference>
<dbReference type="GO" id="GO:0000287">
    <property type="term" value="F:magnesium ion binding"/>
    <property type="evidence" value="ECO:0007669"/>
    <property type="project" value="InterPro"/>
</dbReference>
<dbReference type="GO" id="GO:0031409">
    <property type="term" value="F:pigment binding"/>
    <property type="evidence" value="ECO:0007669"/>
    <property type="project" value="UniProtKB-KW"/>
</dbReference>
<dbReference type="GO" id="GO:0042759">
    <property type="term" value="P:long-chain fatty acid biosynthetic process"/>
    <property type="evidence" value="ECO:0007669"/>
    <property type="project" value="InterPro"/>
</dbReference>
<dbReference type="CDD" id="cd00828">
    <property type="entry name" value="elong_cond_enzymes"/>
    <property type="match status" value="1"/>
</dbReference>
<dbReference type="CDD" id="cd08950">
    <property type="entry name" value="KR_fFAS_SDR_c_like"/>
    <property type="match status" value="1"/>
</dbReference>
<dbReference type="FunFam" id="3.90.470.20:FF:000005">
    <property type="entry name" value="Fatty acid synthase alpha subunit FasA"/>
    <property type="match status" value="1"/>
</dbReference>
<dbReference type="FunFam" id="3.90.25.70:FF:000001">
    <property type="entry name" value="Fatty acid synthase subunit alpha"/>
    <property type="match status" value="1"/>
</dbReference>
<dbReference type="Gene3D" id="3.30.70.2490">
    <property type="match status" value="1"/>
</dbReference>
<dbReference type="Gene3D" id="3.40.47.10">
    <property type="match status" value="1"/>
</dbReference>
<dbReference type="Gene3D" id="3.90.25.70">
    <property type="match status" value="1"/>
</dbReference>
<dbReference type="Gene3D" id="6.10.140.1410">
    <property type="match status" value="1"/>
</dbReference>
<dbReference type="Gene3D" id="3.90.470.20">
    <property type="entry name" value="4'-phosphopantetheinyl transferase domain"/>
    <property type="match status" value="1"/>
</dbReference>
<dbReference type="Gene3D" id="3.40.50.720">
    <property type="entry name" value="NAD(P)-binding Rossmann-like Domain"/>
    <property type="match status" value="2"/>
</dbReference>
<dbReference type="InterPro" id="IPR008278">
    <property type="entry name" value="4-PPantetheinyl_Trfase_dom"/>
</dbReference>
<dbReference type="InterPro" id="IPR037143">
    <property type="entry name" value="4-PPantetheinyl_Trfase_dom_sf"/>
</dbReference>
<dbReference type="InterPro" id="IPR016035">
    <property type="entry name" value="Acyl_Trfase/lysoPLipase"/>
</dbReference>
<dbReference type="InterPro" id="IPR040899">
    <property type="entry name" value="Fas_alpha_ACP"/>
</dbReference>
<dbReference type="InterPro" id="IPR047224">
    <property type="entry name" value="FAS_alpha_su_C"/>
</dbReference>
<dbReference type="InterPro" id="IPR026025">
    <property type="entry name" value="FAS_alpha_yeast"/>
</dbReference>
<dbReference type="InterPro" id="IPR041550">
    <property type="entry name" value="FASI_helical"/>
</dbReference>
<dbReference type="InterPro" id="IPR050830">
    <property type="entry name" value="Fungal_FAS"/>
</dbReference>
<dbReference type="InterPro" id="IPR018201">
    <property type="entry name" value="Ketoacyl_synth_AS"/>
</dbReference>
<dbReference type="InterPro" id="IPR014031">
    <property type="entry name" value="Ketoacyl_synth_C"/>
</dbReference>
<dbReference type="InterPro" id="IPR014030">
    <property type="entry name" value="Ketoacyl_synth_N"/>
</dbReference>
<dbReference type="InterPro" id="IPR036291">
    <property type="entry name" value="NAD(P)-bd_dom_sf"/>
</dbReference>
<dbReference type="InterPro" id="IPR020841">
    <property type="entry name" value="PKS_Beta-ketoAc_synthase_dom"/>
</dbReference>
<dbReference type="InterPro" id="IPR004568">
    <property type="entry name" value="Ppantetheine-prot_Trfase_dom"/>
</dbReference>
<dbReference type="InterPro" id="IPR016039">
    <property type="entry name" value="Thiolase-like"/>
</dbReference>
<dbReference type="NCBIfam" id="TIGR00556">
    <property type="entry name" value="pantethn_trn"/>
    <property type="match status" value="1"/>
</dbReference>
<dbReference type="PANTHER" id="PTHR10982:SF21">
    <property type="entry name" value="FATTY ACID SYNTHASE SUBUNIT BETA"/>
    <property type="match status" value="1"/>
</dbReference>
<dbReference type="PANTHER" id="PTHR10982">
    <property type="entry name" value="MALONYL COA-ACYL CARRIER PROTEIN TRANSACYLASE"/>
    <property type="match status" value="1"/>
</dbReference>
<dbReference type="Pfam" id="PF01648">
    <property type="entry name" value="ACPS"/>
    <property type="match status" value="1"/>
</dbReference>
<dbReference type="Pfam" id="PF18325">
    <property type="entry name" value="Fas_alpha_ACP"/>
    <property type="match status" value="1"/>
</dbReference>
<dbReference type="Pfam" id="PF18314">
    <property type="entry name" value="FAS_I_H"/>
    <property type="match status" value="1"/>
</dbReference>
<dbReference type="Pfam" id="PF00109">
    <property type="entry name" value="ketoacyl-synt"/>
    <property type="match status" value="1"/>
</dbReference>
<dbReference type="Pfam" id="PF02801">
    <property type="entry name" value="Ketoacyl-synt_C"/>
    <property type="match status" value="1"/>
</dbReference>
<dbReference type="PIRSF" id="PIRSF000454">
    <property type="entry name" value="FAS_yeast_alpha"/>
    <property type="match status" value="1"/>
</dbReference>
<dbReference type="SMART" id="SM00825">
    <property type="entry name" value="PKS_KS"/>
    <property type="match status" value="1"/>
</dbReference>
<dbReference type="SUPFAM" id="SSF56214">
    <property type="entry name" value="4'-phosphopantetheinyl transferase"/>
    <property type="match status" value="1"/>
</dbReference>
<dbReference type="SUPFAM" id="SSF52151">
    <property type="entry name" value="FabD/lysophospholipase-like"/>
    <property type="match status" value="1"/>
</dbReference>
<dbReference type="SUPFAM" id="SSF51735">
    <property type="entry name" value="NAD(P)-binding Rossmann-fold domains"/>
    <property type="match status" value="1"/>
</dbReference>
<dbReference type="SUPFAM" id="SSF53901">
    <property type="entry name" value="Thiolase-like"/>
    <property type="match status" value="2"/>
</dbReference>
<dbReference type="PROSITE" id="PS50075">
    <property type="entry name" value="CARRIER"/>
    <property type="match status" value="1"/>
</dbReference>
<dbReference type="PROSITE" id="PS00606">
    <property type="entry name" value="KS3_1"/>
    <property type="match status" value="1"/>
</dbReference>
<dbReference type="PROSITE" id="PS52004">
    <property type="entry name" value="KS3_2"/>
    <property type="match status" value="1"/>
</dbReference>
<dbReference type="PROSITE" id="PS00012">
    <property type="entry name" value="PHOSPHOPANTETHEINE"/>
    <property type="match status" value="1"/>
</dbReference>
<keyword id="KW-0460">Magnesium</keyword>
<keyword id="KW-0479">Metal-binding</keyword>
<keyword id="KW-0511">Multifunctional enzyme</keyword>
<keyword id="KW-0521">NADP</keyword>
<keyword id="KW-0560">Oxidoreductase</keyword>
<keyword id="KW-0596">Phosphopantetheine</keyword>
<keyword id="KW-0597">Phosphoprotein</keyword>
<keyword id="KW-0608">Pigment</keyword>
<keyword id="KW-0808">Transferase</keyword>
<accession>A0A1D5AG16</accession>
<reference key="1">
    <citation type="submission" date="2012-09" db="EMBL/GenBank/DDBJ databases">
        <title>Identification of fatty acid synthase alpha subunit gene related to Monascus pigments biosynthesis in Monascus ruber.</title>
        <authorList>
            <person name="Xie N."/>
            <person name="Liu Q."/>
            <person name="Chen F."/>
        </authorList>
    </citation>
    <scope>NUCLEOTIDE SEQUENCE [GENOMIC DNA]</scope>
    <source>
        <strain>M7</strain>
    </source>
</reference>
<reference key="2">
    <citation type="journal article" date="1977" name="Plant Physiol.">
        <title>Pigmentation and antibacterial activity of fast neutron- and X-ray-induced strains of Monascus purpureus went.</title>
        <authorList>
            <person name="Wong H.C."/>
            <person name="Bau Y.S."/>
        </authorList>
    </citation>
    <scope>BIOTECHNOLOGY</scope>
</reference>
<reference key="3">
    <citation type="journal article" date="2005" name="Chem. Biodivers.">
        <title>Anti-tumor-initiating effects of monascin, an azaphilonoid pigment from the extract of Monascus pilosus fermented rice (red-mold rice).</title>
        <authorList>
            <person name="Akihisa T."/>
            <person name="Tokuda H."/>
            <person name="Ukiya M."/>
            <person name="Kiyota A."/>
            <person name="Yasukawa K."/>
            <person name="Sakamoto N."/>
            <person name="Kimura Y."/>
            <person name="Suzuki T."/>
            <person name="Takayasu J."/>
            <person name="Nishino H."/>
        </authorList>
    </citation>
    <scope>BIOTECHNOLOGY</scope>
</reference>
<reference key="4">
    <citation type="journal article" date="2006" name="Appl. Microbiol. Biotechnol.">
        <title>In vivo hypolipidemic effects and safety of low dosage Monascus powder in a hamster model of hyperlipidemia.</title>
        <authorList>
            <person name="Lee C.L."/>
            <person name="Tsai T.Y."/>
            <person name="Wang J.J."/>
            <person name="Pan T.M."/>
        </authorList>
    </citation>
    <scope>BIOTECHNOLOGY</scope>
</reference>
<reference key="5">
    <citation type="journal article" date="2010" name="J. Agric. Food Chem.">
        <title>Monascin and ankaflavin act as novel hypolipidemic and high-density lipoprotein cholesterol-raising agents in red mold dioscorea.</title>
        <authorList>
            <person name="Lee C.L."/>
            <person name="Kung Y.H."/>
            <person name="Wu C.L."/>
            <person name="Hsu Y.W."/>
            <person name="Pan T.M."/>
        </authorList>
    </citation>
    <scope>BIOTECHNOLOGY</scope>
</reference>
<reference key="6">
    <citation type="journal article" date="2012" name="Appl. Microbiol. Biotechnol.">
        <title>Development of Monascus fermentation technology for high hypolipidemic effect.</title>
        <authorList>
            <person name="Lee C.L."/>
            <person name="Pan T.M."/>
        </authorList>
    </citation>
    <scope>BIOTECHNOLOGY</scope>
</reference>
<reference key="7">
    <citation type="journal article" date="2016" name="Appl. Microbiol. Biotechnol.">
        <title>Identification and role analysis of an intermediate produced by a polygenic mutant of Monascus pigments cluster in Monascus ruber M7.</title>
        <authorList>
            <person name="Liu J."/>
            <person name="Zhou Y."/>
            <person name="Yi T."/>
            <person name="Zhao M."/>
            <person name="Xie N."/>
            <person name="Lei M."/>
            <person name="Liu Q."/>
            <person name="Shao Y."/>
            <person name="Chen F."/>
        </authorList>
    </citation>
    <scope>FUNCTION</scope>
    <scope>PATHWAY</scope>
</reference>
<reference key="8">
    <citation type="journal article" date="2017" name="Chem. Sci.">
        <title>Orange, red, yellow: biosynthesis of azaphilone pigments in Monascus fungi.</title>
        <authorList>
            <person name="Chen W."/>
            <person name="Chen R."/>
            <person name="Liu Q."/>
            <person name="He Y."/>
            <person name="He K."/>
            <person name="Ding X."/>
            <person name="Kang L."/>
            <person name="Guo X."/>
            <person name="Xie N."/>
            <person name="Zhou Y."/>
            <person name="Lu Y."/>
            <person name="Cox R.J."/>
            <person name="Molnar I."/>
            <person name="Li M."/>
            <person name="Shao Y."/>
            <person name="Chen F."/>
        </authorList>
    </citation>
    <scope>FUNCTION</scope>
    <scope>DISRUPTION PHENOTYPE</scope>
    <scope>PATHWAY</scope>
</reference>
<reference key="9">
    <citation type="journal article" date="2021" name="Front. Microbiol.">
        <title>An integrated approach to determine the boundaries of the azaphilone pigment biosynthetic gene cluster of Monascus ruber M7 gown on potato dextrose agar.</title>
        <authorList>
            <person name="Liu Q."/>
            <person name="Zhong S."/>
            <person name="Wang X."/>
            <person name="Gao S."/>
            <person name="Yang X."/>
            <person name="Chen F."/>
            <person name="Molnar I."/>
        </authorList>
    </citation>
    <scope>FUNCTION</scope>
    <scope>INDUCTION</scope>
</reference>
<reference key="10">
    <citation type="journal article" date="2023" name="Food Res. Intern.">
        <title>Improved natural food colorant production in the filamentous fungus Monascus ruber using CRISPR-based engineering.</title>
        <authorList>
            <person name="Ree Yoon H."/>
            <person name="Han S."/>
            <person name="Chul Shin S."/>
            <person name="Cheong Yeom S."/>
            <person name="Jin Kim H."/>
        </authorList>
    </citation>
    <scope>BIOTECHNOLOGY</scope>
</reference>
<protein>
    <recommendedName>
        <fullName evidence="15">Fatty acid synthase alpha subunit pigJ</fullName>
        <ecNumber evidence="1">2.3.1.86</ecNumber>
    </recommendedName>
    <domain>
        <recommendedName>
            <fullName evidence="1">3-oxoacyl-[acyl-carrier-protein] reductase</fullName>
            <ecNumber evidence="1">1.1.1.100</ecNumber>
        </recommendedName>
        <alternativeName>
            <fullName evidence="1">Beta-ketoacyl reductase</fullName>
        </alternativeName>
    </domain>
    <domain>
        <recommendedName>
            <fullName evidence="1">3-oxoacyl-[acyl-carrier-protein] synthase</fullName>
            <ecNumber evidence="1">2.3.1.41</ecNumber>
        </recommendedName>
        <alternativeName>
            <fullName evidence="15">Azaphilone pigments biosynthesis cluster protein J</fullName>
        </alternativeName>
    </domain>
</protein>
<comment type="function">
    <text evidence="11 12 13">Fatty acid synthase alpha subunit; part of the gene cluster that mediates the biosynthesis of azaphilone pigments (MonAzPs), a complex mixture of compounds with a common azaphilone skeleton very widely used as food colorants (PubMed:26946170, PubMed:28959415, PubMed:34220766). PigJ and pigK form the two subunits of a dedicated fungal fatty acid synthase (FAS) that produces the side chain fatty acyl moiety of MonAzPs, a beta-keto fatty acid. The chain length control of the pigJ-pigK FAS is somewhat flexible as MonAzPs features either a beta-ketooctanoic or a beta-ketodecanoic acid moiety. The beta-ketoacyl-ACP probably serves as the substrate for the acetyltransferase pigD that directly transfers the fatty acyl chain to the C-4 alcohol of the pyran ring (PubMed:28959415). The first step of the pathway is performed by the nrPKS pigA that forms the hexaketide precursor from successive condensations of five malonyl-CoA units, with a simple acetyl-CoA starter unit. The role of esterase pigG is not clear, but it may play at most a supplementary role in the formation of the benzaldehyde produced by the pigA nrPKS. This very reactive benzaldehyde is intercepted by the pigC ketoreductase that to provide the first stable enzyme-free MonAzPs intermediate, 6-(4-hydroxy-2-oxopentyl)-3-methyl-2,4-dioxocyclohexane carbaldehyde, also known as M7PKS-1. The FAD-dependent monooxygenase pigN hydroxylates M7PKS-1 at C-4, which triggers the formation of the pyran ring. PigJ, pigK and pigD are involved in the acetylation of the pyran ring. PigJ and pigK form the two subunits of a dedicated fungal FAS that produces the side chain fatty acyl moiety of MonAzPs and pigD transfers the fatty acyl chain to the C-4 alcohol. PigM and pigO are involved in the elimination of the omega-1 alcohol. PigM acts as an O-acetyltransferase that synthesizes the putative O-11 acetyl intermediate whereas pigO eliminates acetic acid to yield an intermediate with a C10(11) double bond. The dehydration of the C-11 alcohol followed by the reduction of the C6(7) double bond by the NAD(P)H-dependent oxidoreductase pigE increases the electrophilicity of the C-5 ketone of the resulting acyl benzopyran. This in turn sets up the C-5 ketone for an intramolecular Knoevenagel aldol condensation with the C-20 enol of the side chain. This condensation affords the characteristic linear tricyclic carbon skeletons of the yellow pigments that serve as the common precursors for the classical yellow pigments monascin and ankaflavin, orange pigments rubopunctatin and monascorubrin, and red pigments ribropunctamine and monascorubramine. The FAD-dependent oxidoreductase pigF is especially invoved in the biosynthesis of orange and red pigments via desaturation of C6(7) (PubMed:28959415).</text>
</comment>
<comment type="catalytic activity">
    <reaction evidence="1">
        <text>acetyl-CoA + n malonyl-CoA + 2n NADPH + 4n H(+) = a long-chain-acyl-CoA + n CoA + n CO2 + 2n NADP(+).</text>
        <dbReference type="EC" id="2.3.1.86"/>
    </reaction>
</comment>
<comment type="catalytic activity">
    <reaction evidence="1">
        <text>a fatty acyl-[ACP] + malonyl-[ACP] + H(+) = a 3-oxoacyl-[ACP] + holo-[ACP] + CO2</text>
        <dbReference type="Rhea" id="RHEA:22836"/>
        <dbReference type="Rhea" id="RHEA-COMP:9623"/>
        <dbReference type="Rhea" id="RHEA-COMP:9685"/>
        <dbReference type="Rhea" id="RHEA-COMP:9916"/>
        <dbReference type="Rhea" id="RHEA-COMP:14125"/>
        <dbReference type="ChEBI" id="CHEBI:15378"/>
        <dbReference type="ChEBI" id="CHEBI:16526"/>
        <dbReference type="ChEBI" id="CHEBI:64479"/>
        <dbReference type="ChEBI" id="CHEBI:78449"/>
        <dbReference type="ChEBI" id="CHEBI:78776"/>
        <dbReference type="ChEBI" id="CHEBI:138651"/>
        <dbReference type="EC" id="2.3.1.41"/>
    </reaction>
</comment>
<comment type="catalytic activity">
    <reaction evidence="1">
        <text>a (3R)-hydroxyacyl-[ACP] + NADP(+) = a 3-oxoacyl-[ACP] + NADPH + H(+)</text>
        <dbReference type="Rhea" id="RHEA:17397"/>
        <dbReference type="Rhea" id="RHEA-COMP:9916"/>
        <dbReference type="Rhea" id="RHEA-COMP:9945"/>
        <dbReference type="ChEBI" id="CHEBI:15378"/>
        <dbReference type="ChEBI" id="CHEBI:57783"/>
        <dbReference type="ChEBI" id="CHEBI:58349"/>
        <dbReference type="ChEBI" id="CHEBI:78776"/>
        <dbReference type="ChEBI" id="CHEBI:78827"/>
        <dbReference type="EC" id="1.1.1.100"/>
    </reaction>
</comment>
<comment type="pathway">
    <text evidence="11 12">Secondary metabolite biosynthesis.</text>
</comment>
<comment type="subunit">
    <text evidence="1">[Alpha(6)beta(6)] hexamers of two multifunctional subunits (alpha and beta).</text>
</comment>
<comment type="induction">
    <text evidence="13">Expression does not seem to be regulated by the azaphilone pigments (MonAzPs) gene cluster-specific transcription regulator pigB.</text>
</comment>
<comment type="disruption phenotype">
    <text evidence="12">Leads to the accumulation of pyran intermediates devoid of the medium-chain fatty acyl moiety such as monascusone A.</text>
</comment>
<comment type="biotechnology">
    <text evidence="6 7 8 9 10 14">As colorants, MonAzPs are widely used in various food products for centuries (PubMed:37087240). Moreover, MonAzPs also possess wide-ranging biological activities such as antibacterial activity, preventing hypertension, lowering cholesterol levels, causing hypolipidemic effects, and displaying antiobesity and antitumor activities (PubMed:16283302, PubMed:16660141, PubMed:17191930, PubMed:20666456, PubMed:22562164).</text>
</comment>
<comment type="similarity">
    <text evidence="16">Belongs to the thiolase-like superfamily. Fungal fatty acid synthetase subunit alpha family.</text>
</comment>
<feature type="chain" id="PRO_0000460203" description="Fatty acid synthase alpha subunit pigJ">
    <location>
        <begin position="1"/>
        <end position="1842"/>
    </location>
</feature>
<feature type="domain" description="Carrier" evidence="3">
    <location>
        <begin position="184"/>
        <end position="262"/>
    </location>
</feature>
<feature type="domain" description="Ketosynthase family 3 (KS3)" evidence="4">
    <location>
        <begin position="1058"/>
        <end position="1585"/>
    </location>
</feature>
<feature type="region of interest" description="Disordered" evidence="5">
    <location>
        <begin position="120"/>
        <end position="184"/>
    </location>
</feature>
<feature type="region of interest" description="Beta-ketoacyl reductase" evidence="1">
    <location>
        <begin position="611"/>
        <end position="807"/>
    </location>
</feature>
<feature type="region of interest" description="Disordered" evidence="5">
    <location>
        <begin position="1649"/>
        <end position="1672"/>
    </location>
</feature>
<feature type="compositionally biased region" description="Low complexity" evidence="5">
    <location>
        <begin position="140"/>
        <end position="175"/>
    </location>
</feature>
<feature type="compositionally biased region" description="Low complexity" evidence="5">
    <location>
        <begin position="1658"/>
        <end position="1668"/>
    </location>
</feature>
<feature type="active site" description="For beta-ketoacyl synthase activity" evidence="4">
    <location>
        <position position="1244"/>
    </location>
</feature>
<feature type="active site" description="For beta-ketoacyl synthase activity" evidence="4">
    <location>
        <position position="1470"/>
    </location>
</feature>
<feature type="active site" description="For beta-ketoacyl synthase activity" evidence="4">
    <location>
        <position position="1511"/>
    </location>
</feature>
<feature type="binding site" evidence="1">
    <location>
        <begin position="1725"/>
        <end position="1727"/>
    </location>
    <ligand>
        <name>acetyl-CoA</name>
        <dbReference type="ChEBI" id="CHEBI:57288"/>
    </ligand>
</feature>
<feature type="binding site" evidence="1">
    <location>
        <position position="1725"/>
    </location>
    <ligand>
        <name>Mg(2+)</name>
        <dbReference type="ChEBI" id="CHEBI:18420"/>
    </ligand>
</feature>
<feature type="binding site" evidence="1">
    <location>
        <position position="1726"/>
    </location>
    <ligand>
        <name>Mg(2+)</name>
        <dbReference type="ChEBI" id="CHEBI:18420"/>
    </ligand>
</feature>
<feature type="binding site" evidence="1">
    <location>
        <position position="1727"/>
    </location>
    <ligand>
        <name>Mg(2+)</name>
        <dbReference type="ChEBI" id="CHEBI:18420"/>
    </ligand>
</feature>
<feature type="binding site" evidence="1">
    <location>
        <position position="1761"/>
    </location>
    <ligand>
        <name>acetyl-CoA</name>
        <dbReference type="ChEBI" id="CHEBI:57288"/>
    </ligand>
</feature>
<feature type="binding site" evidence="1">
    <location>
        <begin position="1770"/>
        <end position="1780"/>
    </location>
    <ligand>
        <name>acetyl-CoA</name>
        <dbReference type="ChEBI" id="CHEBI:57288"/>
    </ligand>
</feature>
<feature type="binding site" evidence="1">
    <location>
        <begin position="1823"/>
        <end position="1825"/>
    </location>
    <ligand>
        <name>acetyl-CoA</name>
        <dbReference type="ChEBI" id="CHEBI:57288"/>
    </ligand>
</feature>
<feature type="binding site" evidence="1">
    <location>
        <position position="1824"/>
    </location>
    <ligand>
        <name>Mg(2+)</name>
        <dbReference type="ChEBI" id="CHEBI:18420"/>
    </ligand>
</feature>
<feature type="binding site" evidence="1">
    <location>
        <position position="1825"/>
    </location>
    <ligand>
        <name>Mg(2+)</name>
        <dbReference type="ChEBI" id="CHEBI:18420"/>
    </ligand>
</feature>
<feature type="modified residue" description="O-(pantetheine 4'-phosphoryl)serine" evidence="2">
    <location>
        <position position="222"/>
    </location>
</feature>
<proteinExistence type="evidence at protein level"/>
<name>PIGJ_MONRU</name>
<gene>
    <name evidence="15" type="primary">pigJ</name>
</gene>
<sequence>MAVRKLVPETAPVVDDAPASTSVDHKRSLAHKLLIELLSYQLALPVRWIETQNELLQWPETIQRYVEVGPRTTLVTMAKKTAARRASSQIVSASKLSTLKFLCTSDNTAEIYYEYPQESGAPVEEEGSKSDAAAPALAVSGSSRTATTAKATVTTPSSSSPETAPPAASTPSQGTPAGGSTTPDIPLSAKHVVLAMIAQKFRRAFDNIPTQKTVQELSGGKSTLQNEIMGDLAVEFGQLPDGGEYIPLDALGDALQGNFPGKPGKQMSSLITKLISRKMPGGFNQAAMQNHLEREWGFSKAHGQVVICLAITVEPESRLESADSAREFLDGLVSRYASYAGITMTPRGKGNVSADHSSAVMVDESVLNGIKREQRDYQIKELELLSKHLQLDTAADDAVLNELRASQKSLEEKLDRWASEFDDKFFSGIEAIFDARKVRQYDSWWNWAREDTMRLLSRMRPGQLPLQHLQEQGLVAQLLRRWEPSCAEIVQNFLDTGECKEPFLATAAEILRLGSDALKKSPVYRFTTPSMKPRTVISATGCVEYSEVPRENSSYIALLKQGLVAASGERVPYVHLKKKAPDQAWRYDAQSTEILLEALGTGSGAGLTFSGKTVLVTGAGPNSIGAAVVRGLLNGGAKVIVTTSRSVSSAASFFQRMYRECAARGATMAVVPFNQASKRDCESLVEYIYGAHSPVDGDLDYLVPFGAIPEKVELSKLDGASELAHRAMLVNILRILGLVYKEKEQRGLRTRPTTVIVPLSFNLGGFGGDGLYPESKIGLEALFNRYFSGNWSDYLSICGAAIGWVRGTTLSQSIRLLGEAIEHANGLDVITFSQEEMAFNILALMTPSIAETCEEGPVYADLTGGAKAIANIKDVMAAARAKFLKESSIQKALLAERAYEQRVLYGSESPRNDTSSPRPRLSTKRARLSLEFPEVPSKSDLKAHLVDLQGMVDLSRTVVVVGFSELGPWGNARTRWQMEHLTDLTPEGYIEMAWIMGLVEHFQGHLDGKPFVGWVDAQTKQPVADAEFKEKYQAHILAHAGLRFVEPDLLGGYDPSKKEFLQEIVVEEALPSFSTSKANADAFRLRLGDKVAVRRMPESDEYLVQVKRGAHFFVPKAVPFNRGVAGLLPAGWDPLRYGIPEDIVQQVDPVTLYALCCVSEALLSAGIRDPYELYRYIHVSELANCLGTGAGAQSAAQRLYKKRYLDHAVQSDILSESFLNTTAAWVNMLVFSSTGPIKTPVGACATAIESLDIGCDAIRSGRSQVALVGGYDDFREEASYEFAMMNATASSVGELAQGRLPREMSRPSTTTRGGFVESAGCGVQLIMNAELAIEMGLPIHAIIAYTQMAGDKIGRSIPAPGQGILTAARETSAGHDSALLDLAHRRKRLTDEVDAVHQWVTQQLAATRGPAGWPDRAIDEIEATALRKIKHAQHAWGNDIRCQDPSISPLKASLATWGLTIDDVQVVSMHGTSTKANDTNEADVISQQMDHLGRRPGNPLLAVCQKALTGHPKGAAGAWQLHGCMQMLQTGIVPGNRNADNIDSKLRQHRHIVYPMESMPMPQLKAAMLTSFGFGQKGGIAVVVAARHLFSAMAEDELEAYRRRVAKRQREADSAYVSGIMSKSLFKAKEVSVWGKSDASMSRMLLDPKARVGGHPENNNNNNNNSSSKRNTSIERLTRLLLPSQKPETEASPEGQQSTSLTASIQALLASQSTTRPTSTSIGVDVEAISSIPMGNAVFLERNFTRSERDHCFSSPTPQASFAGRWSAKEAVFKSLQTPSVGAGAAMAEIEIVSDGGVPKVQLHGRAKEVALAKGIRNIQASITHSGETVTAVALAESSPMC</sequence>